<evidence type="ECO:0000250" key="1"/>
<evidence type="ECO:0000255" key="2">
    <source>
        <dbReference type="PROSITE-ProRule" id="PRU00214"/>
    </source>
</evidence>
<evidence type="ECO:0000305" key="3"/>
<proteinExistence type="inferred from homology"/>
<feature type="chain" id="PRO_0000267632" description="Small ubiquitin-related modifier 3">
    <location>
        <begin position="1"/>
        <end position="92"/>
    </location>
</feature>
<feature type="propeptide" id="PRO_0000267633" evidence="1">
    <location>
        <begin position="93"/>
        <end position="94"/>
    </location>
</feature>
<feature type="domain" description="Ubiquitin-like" evidence="2">
    <location>
        <begin position="15"/>
        <end position="92"/>
    </location>
</feature>
<feature type="cross-link" description="Glycyl lysine isopeptide (Lys-Gly) (interchain with G-Cter in SUMO)" evidence="1">
    <location>
        <position position="11"/>
    </location>
</feature>
<feature type="cross-link" description="Glycyl lysine isopeptide (Gly-Lys) (interchain with K-? in acceptor proteins)" evidence="2">
    <location>
        <position position="92"/>
    </location>
</feature>
<comment type="function">
    <text evidence="1">Ubiquitin-like protein which can be covalently attached to target lysines either as a monomer or as a lysine-linked polymer. Does not seem to be involved in protein degradation and may function as an antagonist of ubiquitin in the degradation process. Plays a role in a number of cellular processes such as nuclear transport, DNA replication and repair, mitosis and signal transduction. Covalent attachment to its substrates requires prior activation by the E1 complex sae1-sae2 and linkage to the E2 enzyme ube2i (By similarity).</text>
</comment>
<comment type="subunit">
    <text evidence="1">Interacts with sae2 and ube2i. Covalently attached to a number of proteins (By similarity).</text>
</comment>
<comment type="subcellular location">
    <subcellularLocation>
        <location evidence="1">Cytoplasm</location>
    </subcellularLocation>
    <subcellularLocation>
        <location evidence="1">Nucleus</location>
        <location evidence="1">PML body</location>
    </subcellularLocation>
</comment>
<comment type="PTM">
    <text evidence="1">Polymeric chains can be formed through Lys-11 cross-linking.</text>
</comment>
<comment type="PTM">
    <text evidence="1">Cleavage of precursor form by a sentrin-specific protease is necessary for function.</text>
</comment>
<comment type="similarity">
    <text evidence="3">Belongs to the ubiquitin family. SUMO subfamily.</text>
</comment>
<dbReference type="EMBL" id="BC075786">
    <property type="protein sequence ID" value="AAH75786.1"/>
    <property type="molecule type" value="mRNA"/>
</dbReference>
<dbReference type="RefSeq" id="NP_001002677.2">
    <property type="nucleotide sequence ID" value="NM_001002677.2"/>
</dbReference>
<dbReference type="BMRB" id="Q6DI05"/>
<dbReference type="SMR" id="Q6DI05"/>
<dbReference type="FunCoup" id="Q6DI05">
    <property type="interactions" value="2390"/>
</dbReference>
<dbReference type="PeptideAtlas" id="Q6DI05"/>
<dbReference type="GeneID" id="436950"/>
<dbReference type="KEGG" id="dre:436950"/>
<dbReference type="AGR" id="ZFIN:ZDB-GENE-040718-426"/>
<dbReference type="CTD" id="436950"/>
<dbReference type="ZFIN" id="ZDB-GENE-040718-426">
    <property type="gene designation" value="sumo3b"/>
</dbReference>
<dbReference type="eggNOG" id="KOG1769">
    <property type="taxonomic scope" value="Eukaryota"/>
</dbReference>
<dbReference type="InParanoid" id="Q6DI05"/>
<dbReference type="OrthoDB" id="442921at2759"/>
<dbReference type="PhylomeDB" id="Q6DI05"/>
<dbReference type="Reactome" id="R-DRE-3108214">
    <property type="pathway name" value="SUMOylation of DNA damage response and repair proteins"/>
</dbReference>
<dbReference type="Reactome" id="R-DRE-3899300">
    <property type="pathway name" value="SUMOylation of transcription cofactors"/>
</dbReference>
<dbReference type="Reactome" id="R-DRE-4090294">
    <property type="pathway name" value="SUMOylation of intracellular receptors"/>
</dbReference>
<dbReference type="Reactome" id="R-DRE-4551638">
    <property type="pathway name" value="SUMOylation of chromatin organization proteins"/>
</dbReference>
<dbReference type="PRO" id="PR:Q6DI05"/>
<dbReference type="Proteomes" id="UP000000437">
    <property type="component" value="Chromosome 9"/>
</dbReference>
<dbReference type="GO" id="GO:0005737">
    <property type="term" value="C:cytoplasm"/>
    <property type="evidence" value="ECO:0007669"/>
    <property type="project" value="UniProtKB-SubCell"/>
</dbReference>
<dbReference type="GO" id="GO:0005634">
    <property type="term" value="C:nucleus"/>
    <property type="evidence" value="ECO:0000318"/>
    <property type="project" value="GO_Central"/>
</dbReference>
<dbReference type="GO" id="GO:0016605">
    <property type="term" value="C:PML body"/>
    <property type="evidence" value="ECO:0007669"/>
    <property type="project" value="UniProtKB-SubCell"/>
</dbReference>
<dbReference type="GO" id="GO:0031386">
    <property type="term" value="F:protein tag activity"/>
    <property type="evidence" value="ECO:0000318"/>
    <property type="project" value="GO_Central"/>
</dbReference>
<dbReference type="GO" id="GO:0044389">
    <property type="term" value="F:ubiquitin-like protein ligase binding"/>
    <property type="evidence" value="ECO:0000318"/>
    <property type="project" value="GO_Central"/>
</dbReference>
<dbReference type="GO" id="GO:0016925">
    <property type="term" value="P:protein sumoylation"/>
    <property type="evidence" value="ECO:0000318"/>
    <property type="project" value="GO_Central"/>
</dbReference>
<dbReference type="CDD" id="cd16115">
    <property type="entry name" value="Ubl_SUMO2_3_4"/>
    <property type="match status" value="1"/>
</dbReference>
<dbReference type="FunFam" id="3.10.20.90:FF:000022">
    <property type="entry name" value="Small ubiquitin-related modifier"/>
    <property type="match status" value="1"/>
</dbReference>
<dbReference type="Gene3D" id="3.10.20.90">
    <property type="entry name" value="Phosphatidylinositol 3-kinase Catalytic Subunit, Chain A, domain 1"/>
    <property type="match status" value="1"/>
</dbReference>
<dbReference type="InterPro" id="IPR022617">
    <property type="entry name" value="Rad60/SUMO-like_dom"/>
</dbReference>
<dbReference type="InterPro" id="IPR000626">
    <property type="entry name" value="Ubiquitin-like_dom"/>
</dbReference>
<dbReference type="InterPro" id="IPR029071">
    <property type="entry name" value="Ubiquitin-like_domsf"/>
</dbReference>
<dbReference type="PANTHER" id="PTHR10562">
    <property type="entry name" value="SMALL UBIQUITIN-RELATED MODIFIER"/>
    <property type="match status" value="1"/>
</dbReference>
<dbReference type="Pfam" id="PF11976">
    <property type="entry name" value="Rad60-SLD"/>
    <property type="match status" value="1"/>
</dbReference>
<dbReference type="SMART" id="SM00213">
    <property type="entry name" value="UBQ"/>
    <property type="match status" value="1"/>
</dbReference>
<dbReference type="SUPFAM" id="SSF54236">
    <property type="entry name" value="Ubiquitin-like"/>
    <property type="match status" value="1"/>
</dbReference>
<dbReference type="PROSITE" id="PS50053">
    <property type="entry name" value="UBIQUITIN_2"/>
    <property type="match status" value="1"/>
</dbReference>
<keyword id="KW-0963">Cytoplasm</keyword>
<keyword id="KW-1017">Isopeptide bond</keyword>
<keyword id="KW-0539">Nucleus</keyword>
<keyword id="KW-1185">Reference proteome</keyword>
<keyword id="KW-0832">Ubl conjugation</keyword>
<keyword id="KW-0833">Ubl conjugation pathway</keyword>
<gene>
    <name type="primary">sumo3</name>
    <name type="synonym">sumo3b</name>
    <name type="ORF">zgc:86902</name>
</gene>
<name>SUMO3_DANRE</name>
<accession>Q6DI05</accession>
<reference key="1">
    <citation type="submission" date="2004-07" db="EMBL/GenBank/DDBJ databases">
        <authorList>
            <consortium name="NIH - Zebrafish Gene Collection (ZGC) project"/>
        </authorList>
    </citation>
    <scope>NUCLEOTIDE SEQUENCE [LARGE SCALE MRNA]</scope>
    <source>
        <tissue>Embryo</tissue>
    </source>
</reference>
<protein>
    <recommendedName>
        <fullName>Small ubiquitin-related modifier 3</fullName>
        <shortName>SUMO-3</shortName>
    </recommendedName>
    <alternativeName>
        <fullName>SUMO-3-B</fullName>
    </alternativeName>
</protein>
<sequence length="94" mass="10725">MSEEKPREGVKTENDHINLKVAGQDGSVVQFKIKRHTPLSKLMKAYCERQGLSIRQIRFRFDGQPINETDTPAQLEMEDEDTIDVFQQQTGGSC</sequence>
<organism>
    <name type="scientific">Danio rerio</name>
    <name type="common">Zebrafish</name>
    <name type="synonym">Brachydanio rerio</name>
    <dbReference type="NCBI Taxonomy" id="7955"/>
    <lineage>
        <taxon>Eukaryota</taxon>
        <taxon>Metazoa</taxon>
        <taxon>Chordata</taxon>
        <taxon>Craniata</taxon>
        <taxon>Vertebrata</taxon>
        <taxon>Euteleostomi</taxon>
        <taxon>Actinopterygii</taxon>
        <taxon>Neopterygii</taxon>
        <taxon>Teleostei</taxon>
        <taxon>Ostariophysi</taxon>
        <taxon>Cypriniformes</taxon>
        <taxon>Danionidae</taxon>
        <taxon>Danioninae</taxon>
        <taxon>Danio</taxon>
    </lineage>
</organism>